<keyword id="KW-0963">Cytoplasm</keyword>
<keyword id="KW-1185">Reference proteome</keyword>
<gene>
    <name type="primary">TNFAIP8L1</name>
</gene>
<accession>A5PK29</accession>
<comment type="function">
    <text evidence="1">Acts as a negative regulator of mTOR activity.</text>
</comment>
<comment type="subunit">
    <text evidence="1">Interacts with FBXW5; TNFAIP8L1 competes with TSC2 to bind FBXW5 increasing TSC2 stability by preventing its ubiquitination.</text>
</comment>
<comment type="subcellular location">
    <subcellularLocation>
        <location evidence="1">Cytoplasm</location>
    </subcellularLocation>
</comment>
<comment type="similarity">
    <text evidence="2">Belongs to the TNFAIP8 family.</text>
</comment>
<protein>
    <recommendedName>
        <fullName>Tumor necrosis factor alpha-induced protein 8-like protein 1</fullName>
        <shortName evidence="1">TIPE1</shortName>
        <shortName>TNF alpha-induced protein 8-like protein 1</shortName>
        <shortName>TNFAIP8-like protein 1</shortName>
    </recommendedName>
</protein>
<name>TP8L1_BOVIN</name>
<proteinExistence type="evidence at transcript level"/>
<reference key="1">
    <citation type="submission" date="2007-06" db="EMBL/GenBank/DDBJ databases">
        <authorList>
            <consortium name="NIH - Mammalian Gene Collection (MGC) project"/>
        </authorList>
    </citation>
    <scope>NUCLEOTIDE SEQUENCE [LARGE SCALE MRNA]</scope>
    <source>
        <strain>Hereford</strain>
        <tissue>Thymus</tissue>
    </source>
</reference>
<organism>
    <name type="scientific">Bos taurus</name>
    <name type="common">Bovine</name>
    <dbReference type="NCBI Taxonomy" id="9913"/>
    <lineage>
        <taxon>Eukaryota</taxon>
        <taxon>Metazoa</taxon>
        <taxon>Chordata</taxon>
        <taxon>Craniata</taxon>
        <taxon>Vertebrata</taxon>
        <taxon>Euteleostomi</taxon>
        <taxon>Mammalia</taxon>
        <taxon>Eutheria</taxon>
        <taxon>Laurasiatheria</taxon>
        <taxon>Artiodactyla</taxon>
        <taxon>Ruminantia</taxon>
        <taxon>Pecora</taxon>
        <taxon>Bovidae</taxon>
        <taxon>Bovinae</taxon>
        <taxon>Bos</taxon>
    </lineage>
</organism>
<evidence type="ECO:0000250" key="1">
    <source>
        <dbReference type="UniProtKB" id="Q8K288"/>
    </source>
</evidence>
<evidence type="ECO:0000305" key="2"/>
<sequence>MDTFSTKSLALQAQKKLLSKMASRAVASAFIDDTSSEVLDELYRATKEFTRSRKEAQKLVKNLVKVAVKLGVLLRAGQLGAEELARLQRLRQQARRLAMTAVSFHQVDFTFDRRVLATTLLECRDLLHQAAGAHLTAKSHGRINHVFGHLADCDFLAALYSPAEPYRSHLRRICDGLTRMLDEDSI</sequence>
<dbReference type="EMBL" id="BC142331">
    <property type="protein sequence ID" value="AAI42332.1"/>
    <property type="molecule type" value="mRNA"/>
</dbReference>
<dbReference type="RefSeq" id="NP_001096740.1">
    <property type="nucleotide sequence ID" value="NM_001103270.2"/>
</dbReference>
<dbReference type="RefSeq" id="XP_010805286.1">
    <property type="nucleotide sequence ID" value="XM_010806984.4"/>
</dbReference>
<dbReference type="RefSeq" id="XP_059744219.1">
    <property type="nucleotide sequence ID" value="XM_059888236.1"/>
</dbReference>
<dbReference type="RefSeq" id="XP_059744220.1">
    <property type="nucleotide sequence ID" value="XM_059888237.1"/>
</dbReference>
<dbReference type="RefSeq" id="XP_059744221.1">
    <property type="nucleotide sequence ID" value="XM_059888238.1"/>
</dbReference>
<dbReference type="RefSeq" id="XP_059744222.1">
    <property type="nucleotide sequence ID" value="XM_059888239.1"/>
</dbReference>
<dbReference type="RefSeq" id="XP_059744223.1">
    <property type="nucleotide sequence ID" value="XM_059888240.1"/>
</dbReference>
<dbReference type="RefSeq" id="XP_059744224.1">
    <property type="nucleotide sequence ID" value="XM_059888241.1"/>
</dbReference>
<dbReference type="RefSeq" id="XP_059744225.1">
    <property type="nucleotide sequence ID" value="XM_059888242.1"/>
</dbReference>
<dbReference type="RefSeq" id="XP_059744226.1">
    <property type="nucleotide sequence ID" value="XM_059888243.1"/>
</dbReference>
<dbReference type="SMR" id="A5PK29"/>
<dbReference type="FunCoup" id="A5PK29">
    <property type="interactions" value="294"/>
</dbReference>
<dbReference type="STRING" id="9913.ENSBTAP00000047526"/>
<dbReference type="PaxDb" id="9913-ENSBTAP00000047526"/>
<dbReference type="Ensembl" id="ENSBTAT00000055062.4">
    <property type="protein sequence ID" value="ENSBTAP00000047526.2"/>
    <property type="gene ID" value="ENSBTAG00000037765.4"/>
</dbReference>
<dbReference type="Ensembl" id="ENSBTAT00000088462.1">
    <property type="protein sequence ID" value="ENSBTAP00000101155.1"/>
    <property type="gene ID" value="ENSBTAG00000037765.4"/>
</dbReference>
<dbReference type="Ensembl" id="ENSBTAT00000103772.1">
    <property type="protein sequence ID" value="ENSBTAP00000097703.1"/>
    <property type="gene ID" value="ENSBTAG00000037765.4"/>
</dbReference>
<dbReference type="Ensembl" id="ENSBTAT00000118556.1">
    <property type="protein sequence ID" value="ENSBTAP00000078526.1"/>
    <property type="gene ID" value="ENSBTAG00000037765.4"/>
</dbReference>
<dbReference type="Ensembl" id="ENSBTAT00000120369.1">
    <property type="protein sequence ID" value="ENSBTAP00000086474.1"/>
    <property type="gene ID" value="ENSBTAG00000037765.4"/>
</dbReference>
<dbReference type="Ensembl" id="ENSBTAT00000121949.1">
    <property type="protein sequence ID" value="ENSBTAP00000098803.1"/>
    <property type="gene ID" value="ENSBTAG00000037765.4"/>
</dbReference>
<dbReference type="Ensembl" id="ENSBTAT00000133706.1">
    <property type="protein sequence ID" value="ENSBTAP00000103693.1"/>
    <property type="gene ID" value="ENSBTAG00000037765.4"/>
</dbReference>
<dbReference type="GeneID" id="531850"/>
<dbReference type="KEGG" id="bta:531850"/>
<dbReference type="CTD" id="126282"/>
<dbReference type="VEuPathDB" id="HostDB:ENSBTAG00000037765"/>
<dbReference type="VGNC" id="VGNC:36158">
    <property type="gene designation" value="TNFAIP8L1"/>
</dbReference>
<dbReference type="eggNOG" id="ENOG502S00N">
    <property type="taxonomic scope" value="Eukaryota"/>
</dbReference>
<dbReference type="GeneTree" id="ENSGT00390000003488"/>
<dbReference type="HOGENOM" id="CLU_085918_1_0_1"/>
<dbReference type="InParanoid" id="A5PK29"/>
<dbReference type="OMA" id="QRICNGL"/>
<dbReference type="OrthoDB" id="10055976at2759"/>
<dbReference type="TreeFam" id="TF323415"/>
<dbReference type="Reactome" id="R-BTA-1483255">
    <property type="pathway name" value="PI Metabolism"/>
</dbReference>
<dbReference type="Proteomes" id="UP000009136">
    <property type="component" value="Chromosome 7"/>
</dbReference>
<dbReference type="Bgee" id="ENSBTAG00000037765">
    <property type="expression patterns" value="Expressed in thymus and 106 other cell types or tissues"/>
</dbReference>
<dbReference type="GO" id="GO:0005737">
    <property type="term" value="C:cytoplasm"/>
    <property type="evidence" value="ECO:0000250"/>
    <property type="project" value="UniProtKB"/>
</dbReference>
<dbReference type="GO" id="GO:0032007">
    <property type="term" value="P:negative regulation of TOR signaling"/>
    <property type="evidence" value="ECO:0000250"/>
    <property type="project" value="UniProtKB"/>
</dbReference>
<dbReference type="GO" id="GO:0042981">
    <property type="term" value="P:regulation of apoptotic process"/>
    <property type="evidence" value="ECO:0007669"/>
    <property type="project" value="InterPro"/>
</dbReference>
<dbReference type="FunFam" id="1.20.1440.160:FF:000001">
    <property type="entry name" value="Tumor necrosis factor alpha-induced protein 8-like 1"/>
    <property type="match status" value="1"/>
</dbReference>
<dbReference type="Gene3D" id="1.20.1440.160">
    <property type="entry name" value="Tumor necrosis factor alpha-induced protein 8-like"/>
    <property type="match status" value="1"/>
</dbReference>
<dbReference type="InterPro" id="IPR008477">
    <property type="entry name" value="TNFAIP8-like"/>
</dbReference>
<dbReference type="InterPro" id="IPR038355">
    <property type="entry name" value="TNFAIP8_sf"/>
</dbReference>
<dbReference type="PANTHER" id="PTHR12757:SF2">
    <property type="entry name" value="TUMOR NECROSIS FACTOR ALPHA-INDUCED PROTEIN 8-LIKE PROTEIN 1"/>
    <property type="match status" value="1"/>
</dbReference>
<dbReference type="PANTHER" id="PTHR12757">
    <property type="entry name" value="TUMOR NECROSIS FACTOR INDUCED PROTEIN"/>
    <property type="match status" value="1"/>
</dbReference>
<dbReference type="Pfam" id="PF05527">
    <property type="entry name" value="DUF758"/>
    <property type="match status" value="1"/>
</dbReference>
<feature type="chain" id="PRO_0000331429" description="Tumor necrosis factor alpha-induced protein 8-like protein 1">
    <location>
        <begin position="1"/>
        <end position="186"/>
    </location>
</feature>